<name>PCRB_LISW6</name>
<keyword id="KW-0444">Lipid biosynthesis</keyword>
<keyword id="KW-0443">Lipid metabolism</keyword>
<keyword id="KW-0460">Magnesium</keyword>
<keyword id="KW-0479">Metal-binding</keyword>
<keyword id="KW-0594">Phospholipid biosynthesis</keyword>
<keyword id="KW-1208">Phospholipid metabolism</keyword>
<keyword id="KW-0808">Transferase</keyword>
<reference key="1">
    <citation type="journal article" date="2006" name="J. Bacteriol.">
        <title>Whole-genome sequence of Listeria welshimeri reveals common steps in genome reduction with Listeria innocua as compared to Listeria monocytogenes.</title>
        <authorList>
            <person name="Hain T."/>
            <person name="Steinweg C."/>
            <person name="Kuenne C.T."/>
            <person name="Billion A."/>
            <person name="Ghai R."/>
            <person name="Chatterjee S.S."/>
            <person name="Domann E."/>
            <person name="Kaerst U."/>
            <person name="Goesmann A."/>
            <person name="Bekel T."/>
            <person name="Bartels D."/>
            <person name="Kaiser O."/>
            <person name="Meyer F."/>
            <person name="Puehler A."/>
            <person name="Weisshaar B."/>
            <person name="Wehland J."/>
            <person name="Liang C."/>
            <person name="Dandekar T."/>
            <person name="Lampidis R."/>
            <person name="Kreft J."/>
            <person name="Goebel W."/>
            <person name="Chakraborty T."/>
        </authorList>
    </citation>
    <scope>NUCLEOTIDE SEQUENCE [LARGE SCALE GENOMIC DNA]</scope>
    <source>
        <strain>ATCC 35897 / DSM 20650 / CCUG 15529 / CIP 8149 / NCTC 11857 / SLCC 5334 / V8</strain>
    </source>
</reference>
<proteinExistence type="inferred from homology"/>
<gene>
    <name evidence="1" type="primary">pcrB</name>
    <name type="ordered locus">lwe1777</name>
</gene>
<evidence type="ECO:0000255" key="1">
    <source>
        <dbReference type="HAMAP-Rule" id="MF_00112"/>
    </source>
</evidence>
<organism>
    <name type="scientific">Listeria welshimeri serovar 6b (strain ATCC 35897 / DSM 20650 / CCUG 15529 / CIP 8149 / NCTC 11857 / SLCC 5334 / V8)</name>
    <dbReference type="NCBI Taxonomy" id="386043"/>
    <lineage>
        <taxon>Bacteria</taxon>
        <taxon>Bacillati</taxon>
        <taxon>Bacillota</taxon>
        <taxon>Bacilli</taxon>
        <taxon>Bacillales</taxon>
        <taxon>Listeriaceae</taxon>
        <taxon>Listeria</taxon>
    </lineage>
</organism>
<dbReference type="EC" id="2.5.1.n9" evidence="1"/>
<dbReference type="EMBL" id="AM263198">
    <property type="protein sequence ID" value="CAK21195.1"/>
    <property type="molecule type" value="Genomic_DNA"/>
</dbReference>
<dbReference type="RefSeq" id="WP_011702555.1">
    <property type="nucleotide sequence ID" value="NC_008555.1"/>
</dbReference>
<dbReference type="SMR" id="A0AJL3"/>
<dbReference type="STRING" id="386043.lwe1777"/>
<dbReference type="GeneID" id="61189676"/>
<dbReference type="KEGG" id="lwe:lwe1777"/>
<dbReference type="eggNOG" id="COG1646">
    <property type="taxonomic scope" value="Bacteria"/>
</dbReference>
<dbReference type="HOGENOM" id="CLU_095211_0_0_9"/>
<dbReference type="OrthoDB" id="2381757at2"/>
<dbReference type="UniPathway" id="UPA00940"/>
<dbReference type="Proteomes" id="UP000000779">
    <property type="component" value="Chromosome"/>
</dbReference>
<dbReference type="GO" id="GO:0120536">
    <property type="term" value="F:heptaprenylglyceryl phosphate synthase activity"/>
    <property type="evidence" value="ECO:0007669"/>
    <property type="project" value="RHEA"/>
</dbReference>
<dbReference type="GO" id="GO:0000287">
    <property type="term" value="F:magnesium ion binding"/>
    <property type="evidence" value="ECO:0007669"/>
    <property type="project" value="UniProtKB-UniRule"/>
</dbReference>
<dbReference type="GO" id="GO:0046474">
    <property type="term" value="P:glycerophospholipid biosynthetic process"/>
    <property type="evidence" value="ECO:0007669"/>
    <property type="project" value="UniProtKB-UniRule"/>
</dbReference>
<dbReference type="CDD" id="cd02812">
    <property type="entry name" value="PcrB_like"/>
    <property type="match status" value="1"/>
</dbReference>
<dbReference type="FunFam" id="3.20.20.390:FF:000001">
    <property type="entry name" value="Heptaprenylglyceryl phosphate synthase"/>
    <property type="match status" value="1"/>
</dbReference>
<dbReference type="Gene3D" id="3.20.20.390">
    <property type="entry name" value="FMN-linked oxidoreductases"/>
    <property type="match status" value="1"/>
</dbReference>
<dbReference type="HAMAP" id="MF_00112">
    <property type="entry name" value="GGGP_HepGP_synthase"/>
    <property type="match status" value="1"/>
</dbReference>
<dbReference type="InterPro" id="IPR039074">
    <property type="entry name" value="GGGP/HepGP_synthase_I"/>
</dbReference>
<dbReference type="InterPro" id="IPR038597">
    <property type="entry name" value="GGGP/HepGP_synthase_sf"/>
</dbReference>
<dbReference type="InterPro" id="IPR008205">
    <property type="entry name" value="GGGP_HepGP_synthase"/>
</dbReference>
<dbReference type="NCBIfam" id="TIGR01768">
    <property type="entry name" value="GGGP-family"/>
    <property type="match status" value="1"/>
</dbReference>
<dbReference type="NCBIfam" id="NF003199">
    <property type="entry name" value="PRK04169.1-3"/>
    <property type="match status" value="1"/>
</dbReference>
<dbReference type="PANTHER" id="PTHR40029">
    <property type="match status" value="1"/>
</dbReference>
<dbReference type="PANTHER" id="PTHR40029:SF2">
    <property type="entry name" value="HEPTAPRENYLGLYCERYL PHOSPHATE SYNTHASE"/>
    <property type="match status" value="1"/>
</dbReference>
<dbReference type="Pfam" id="PF01884">
    <property type="entry name" value="PcrB"/>
    <property type="match status" value="1"/>
</dbReference>
<dbReference type="SUPFAM" id="SSF51395">
    <property type="entry name" value="FMN-linked oxidoreductases"/>
    <property type="match status" value="1"/>
</dbReference>
<protein>
    <recommendedName>
        <fullName evidence="1">Heptaprenylglyceryl phosphate synthase</fullName>
        <shortName evidence="1">HepGP synthase</shortName>
        <ecNumber evidence="1">2.5.1.n9</ecNumber>
    </recommendedName>
    <alternativeName>
        <fullName evidence="1">Glycerol-1-phosphate heptaprenyltransferase</fullName>
    </alternativeName>
</protein>
<feature type="chain" id="PRO_0000350670" description="Heptaprenylglyceryl phosphate synthase">
    <location>
        <begin position="1"/>
        <end position="225"/>
    </location>
</feature>
<feature type="binding site" evidence="1">
    <location>
        <position position="6"/>
    </location>
    <ligand>
        <name>sn-glycerol 1-phosphate</name>
        <dbReference type="ChEBI" id="CHEBI:57685"/>
    </ligand>
</feature>
<feature type="binding site" evidence="1">
    <location>
        <position position="8"/>
    </location>
    <ligand>
        <name>Mg(2+)</name>
        <dbReference type="ChEBI" id="CHEBI:18420"/>
    </ligand>
</feature>
<feature type="binding site" evidence="1">
    <location>
        <position position="34"/>
    </location>
    <ligand>
        <name>Mg(2+)</name>
        <dbReference type="ChEBI" id="CHEBI:18420"/>
    </ligand>
</feature>
<feature type="binding site" evidence="1">
    <location>
        <begin position="153"/>
        <end position="158"/>
    </location>
    <ligand>
        <name>sn-glycerol 1-phosphate</name>
        <dbReference type="ChEBI" id="CHEBI:57685"/>
    </ligand>
</feature>
<feature type="binding site" evidence="1">
    <location>
        <position position="183"/>
    </location>
    <ligand>
        <name>sn-glycerol 1-phosphate</name>
        <dbReference type="ChEBI" id="CHEBI:57685"/>
    </ligand>
</feature>
<feature type="binding site" evidence="1">
    <location>
        <begin position="203"/>
        <end position="204"/>
    </location>
    <ligand>
        <name>sn-glycerol 1-phosphate</name>
        <dbReference type="ChEBI" id="CHEBI:57685"/>
    </ligand>
</feature>
<comment type="function">
    <text evidence="1">Prenyltransferase that catalyzes in vivo the transfer of the heptaprenyl moiety of heptaprenyl pyrophosphate (HepPP; 35 carbon atoms) to the C3 hydroxyl of sn-glycerol-1-phosphate (G1P), producing heptaprenylglyceryl phosphate (HepGP). This reaction is an ether-bond-formation step in the biosynthesis of archaea-type G1P-based membrane lipids found in Bacillales.</text>
</comment>
<comment type="catalytic activity">
    <reaction evidence="1">
        <text>sn-glycerol 1-phosphate + all-trans-heptaprenyl diphosphate = 3-heptaprenyl-sn-glycero-1-phosphate + diphosphate</text>
        <dbReference type="Rhea" id="RHEA:33495"/>
        <dbReference type="ChEBI" id="CHEBI:33019"/>
        <dbReference type="ChEBI" id="CHEBI:57685"/>
        <dbReference type="ChEBI" id="CHEBI:58206"/>
        <dbReference type="ChEBI" id="CHEBI:64781"/>
        <dbReference type="EC" id="2.5.1.n9"/>
    </reaction>
</comment>
<comment type="cofactor">
    <cofactor evidence="1">
        <name>Mg(2+)</name>
        <dbReference type="ChEBI" id="CHEBI:18420"/>
    </cofactor>
</comment>
<comment type="pathway">
    <text evidence="1">Membrane lipid metabolism; glycerophospholipid metabolism.</text>
</comment>
<comment type="subunit">
    <text evidence="1">Homodimer.</text>
</comment>
<comment type="similarity">
    <text evidence="1">Belongs to the GGGP/HepGP synthase family. Group I subfamily.</text>
</comment>
<accession>A0AJL3</accession>
<sequence>MKHLFKLDPAKNLPHNSVTRLIHSGTDGFIIGGTDNLQTEAVENLYELLAETDLPIFLEVSDESMILPEAEHFLIPVVLNTENSKWTHGLHKELIKEMGEFIPWKRVTSEGYVILNKDAKVAQLTEAKTDLTEEDIIAYARLAENIFRLPIFYIEYSGMYGNPEVAKKVSAALDDTKFWYGGGIRSKEQAAEMAEYADTIIVGNIIYEDIEKALETTTVFAKKTV</sequence>